<sequence>MALHDENVVWHPHPVTVTAREQLHGHRGVVLWFTGLSGSGKSTVAGALEEALHHRSVSTYLLDGDNVRHGLCRNLGFSDADRKENIRRVGEVASLMADAGLIVLTAFISPHRAERQLVQERVGHDRFIEIYVDTPLAVCEQRDPKGLYKKARAGELRNFTGIDGIYEAPESPQIHLNGEQLVTNLVSQLLDLLRRRDIISS</sequence>
<name>CYSC_SALAR</name>
<gene>
    <name evidence="1" type="primary">cysC</name>
    <name type="ordered locus">SARI_00023</name>
</gene>
<feature type="chain" id="PRO_1000075087" description="Adenylyl-sulfate kinase">
    <location>
        <begin position="1"/>
        <end position="201"/>
    </location>
</feature>
<feature type="active site" description="Phosphoserine intermediate" evidence="1">
    <location>
        <position position="109"/>
    </location>
</feature>
<feature type="binding site" evidence="1">
    <location>
        <begin position="35"/>
        <end position="42"/>
    </location>
    <ligand>
        <name>ATP</name>
        <dbReference type="ChEBI" id="CHEBI:30616"/>
    </ligand>
</feature>
<protein>
    <recommendedName>
        <fullName evidence="1">Adenylyl-sulfate kinase</fullName>
        <ecNumber evidence="1">2.7.1.25</ecNumber>
    </recommendedName>
    <alternativeName>
        <fullName evidence="1">APS kinase</fullName>
    </alternativeName>
    <alternativeName>
        <fullName evidence="1">ATP adenosine-5'-phosphosulfate 3'-phosphotransferase</fullName>
    </alternativeName>
    <alternativeName>
        <fullName evidence="1">Adenosine-5'-phosphosulfate kinase</fullName>
    </alternativeName>
</protein>
<keyword id="KW-0067">ATP-binding</keyword>
<keyword id="KW-0418">Kinase</keyword>
<keyword id="KW-0547">Nucleotide-binding</keyword>
<keyword id="KW-0597">Phosphoprotein</keyword>
<keyword id="KW-1185">Reference proteome</keyword>
<keyword id="KW-0808">Transferase</keyword>
<organism>
    <name type="scientific">Salmonella arizonae (strain ATCC BAA-731 / CDC346-86 / RSK2980)</name>
    <dbReference type="NCBI Taxonomy" id="41514"/>
    <lineage>
        <taxon>Bacteria</taxon>
        <taxon>Pseudomonadati</taxon>
        <taxon>Pseudomonadota</taxon>
        <taxon>Gammaproteobacteria</taxon>
        <taxon>Enterobacterales</taxon>
        <taxon>Enterobacteriaceae</taxon>
        <taxon>Salmonella</taxon>
    </lineage>
</organism>
<dbReference type="EC" id="2.7.1.25" evidence="1"/>
<dbReference type="EMBL" id="CP000880">
    <property type="protein sequence ID" value="ABX19977.1"/>
    <property type="molecule type" value="Genomic_DNA"/>
</dbReference>
<dbReference type="SMR" id="A9MF25"/>
<dbReference type="STRING" id="41514.SARI_00023"/>
<dbReference type="KEGG" id="ses:SARI_00023"/>
<dbReference type="HOGENOM" id="CLU_046932_1_0_6"/>
<dbReference type="UniPathway" id="UPA00140">
    <property type="reaction ID" value="UER00205"/>
</dbReference>
<dbReference type="Proteomes" id="UP000002084">
    <property type="component" value="Chromosome"/>
</dbReference>
<dbReference type="GO" id="GO:0004020">
    <property type="term" value="F:adenylylsulfate kinase activity"/>
    <property type="evidence" value="ECO:0007669"/>
    <property type="project" value="UniProtKB-UniRule"/>
</dbReference>
<dbReference type="GO" id="GO:0005524">
    <property type="term" value="F:ATP binding"/>
    <property type="evidence" value="ECO:0007669"/>
    <property type="project" value="UniProtKB-UniRule"/>
</dbReference>
<dbReference type="GO" id="GO:0070814">
    <property type="term" value="P:hydrogen sulfide biosynthetic process"/>
    <property type="evidence" value="ECO:0007669"/>
    <property type="project" value="UniProtKB-UniRule"/>
</dbReference>
<dbReference type="GO" id="GO:0000103">
    <property type="term" value="P:sulfate assimilation"/>
    <property type="evidence" value="ECO:0007669"/>
    <property type="project" value="UniProtKB-UniRule"/>
</dbReference>
<dbReference type="CDD" id="cd02027">
    <property type="entry name" value="APSK"/>
    <property type="match status" value="1"/>
</dbReference>
<dbReference type="FunFam" id="3.40.50.300:FF:000212">
    <property type="entry name" value="Adenylyl-sulfate kinase"/>
    <property type="match status" value="1"/>
</dbReference>
<dbReference type="Gene3D" id="3.40.50.300">
    <property type="entry name" value="P-loop containing nucleotide triphosphate hydrolases"/>
    <property type="match status" value="1"/>
</dbReference>
<dbReference type="HAMAP" id="MF_00065">
    <property type="entry name" value="Adenylyl_sulf_kinase"/>
    <property type="match status" value="1"/>
</dbReference>
<dbReference type="InterPro" id="IPR002891">
    <property type="entry name" value="APS_kinase"/>
</dbReference>
<dbReference type="InterPro" id="IPR027417">
    <property type="entry name" value="P-loop_NTPase"/>
</dbReference>
<dbReference type="NCBIfam" id="TIGR00455">
    <property type="entry name" value="apsK"/>
    <property type="match status" value="1"/>
</dbReference>
<dbReference type="NCBIfam" id="NF003013">
    <property type="entry name" value="PRK03846.1"/>
    <property type="match status" value="1"/>
</dbReference>
<dbReference type="PANTHER" id="PTHR11055:SF63">
    <property type="entry name" value="ADENYLYL-SULFATE KINASE 1, CHLOROPLASTIC"/>
    <property type="match status" value="1"/>
</dbReference>
<dbReference type="PANTHER" id="PTHR11055">
    <property type="entry name" value="BIFUNCTIONAL 3'-PHOSPHOADENOSINE 5'-PHOSPHOSULFATE SYNTHASE"/>
    <property type="match status" value="1"/>
</dbReference>
<dbReference type="Pfam" id="PF01583">
    <property type="entry name" value="APS_kinase"/>
    <property type="match status" value="1"/>
</dbReference>
<dbReference type="SUPFAM" id="SSF52540">
    <property type="entry name" value="P-loop containing nucleoside triphosphate hydrolases"/>
    <property type="match status" value="1"/>
</dbReference>
<reference key="1">
    <citation type="submission" date="2007-11" db="EMBL/GenBank/DDBJ databases">
        <authorList>
            <consortium name="The Salmonella enterica serovar Arizonae Genome Sequencing Project"/>
            <person name="McClelland M."/>
            <person name="Sanderson E.K."/>
            <person name="Porwollik S."/>
            <person name="Spieth J."/>
            <person name="Clifton W.S."/>
            <person name="Fulton R."/>
            <person name="Chunyan W."/>
            <person name="Wollam A."/>
            <person name="Shah N."/>
            <person name="Pepin K."/>
            <person name="Bhonagiri V."/>
            <person name="Nash W."/>
            <person name="Johnson M."/>
            <person name="Thiruvilangam P."/>
            <person name="Wilson R."/>
        </authorList>
    </citation>
    <scope>NUCLEOTIDE SEQUENCE [LARGE SCALE GENOMIC DNA]</scope>
    <source>
        <strain>ATCC BAA-731 / CDC346-86 / RSK2980</strain>
    </source>
</reference>
<proteinExistence type="inferred from homology"/>
<comment type="function">
    <text evidence="1">Catalyzes the synthesis of activated sulfate.</text>
</comment>
<comment type="catalytic activity">
    <reaction evidence="1">
        <text>adenosine 5'-phosphosulfate + ATP = 3'-phosphoadenylyl sulfate + ADP + H(+)</text>
        <dbReference type="Rhea" id="RHEA:24152"/>
        <dbReference type="ChEBI" id="CHEBI:15378"/>
        <dbReference type="ChEBI" id="CHEBI:30616"/>
        <dbReference type="ChEBI" id="CHEBI:58243"/>
        <dbReference type="ChEBI" id="CHEBI:58339"/>
        <dbReference type="ChEBI" id="CHEBI:456216"/>
        <dbReference type="EC" id="2.7.1.25"/>
    </reaction>
</comment>
<comment type="pathway">
    <text evidence="1">Sulfur metabolism; hydrogen sulfide biosynthesis; sulfite from sulfate: step 2/3.</text>
</comment>
<comment type="similarity">
    <text evidence="1">Belongs to the APS kinase family.</text>
</comment>
<accession>A9MF25</accession>
<evidence type="ECO:0000255" key="1">
    <source>
        <dbReference type="HAMAP-Rule" id="MF_00065"/>
    </source>
</evidence>